<dbReference type="EC" id="3.4.11.1" evidence="1"/>
<dbReference type="EC" id="3.4.11.10" evidence="1"/>
<dbReference type="EMBL" id="AE009951">
    <property type="protein sequence ID" value="AAL94005.1"/>
    <property type="molecule type" value="Genomic_DNA"/>
</dbReference>
<dbReference type="RefSeq" id="NP_602706.1">
    <property type="nucleotide sequence ID" value="NC_003454.1"/>
</dbReference>
<dbReference type="RefSeq" id="WP_011015910.1">
    <property type="nucleotide sequence ID" value="NZ_CP084110.1"/>
</dbReference>
<dbReference type="SMR" id="Q8RHT8"/>
<dbReference type="FunCoup" id="Q8RHT8">
    <property type="interactions" value="237"/>
</dbReference>
<dbReference type="STRING" id="190304.FN1906"/>
<dbReference type="PaxDb" id="190304-FN1906"/>
<dbReference type="EnsemblBacteria" id="AAL94005">
    <property type="protein sequence ID" value="AAL94005"/>
    <property type="gene ID" value="FN1906"/>
</dbReference>
<dbReference type="KEGG" id="fnu:FN1906"/>
<dbReference type="PATRIC" id="fig|190304.8.peg.381"/>
<dbReference type="eggNOG" id="COG0260">
    <property type="taxonomic scope" value="Bacteria"/>
</dbReference>
<dbReference type="HOGENOM" id="CLU_013734_6_3_0"/>
<dbReference type="InParanoid" id="Q8RHT8"/>
<dbReference type="BioCyc" id="FNUC190304:G1FZS-400-MONOMER"/>
<dbReference type="Proteomes" id="UP000002521">
    <property type="component" value="Chromosome"/>
</dbReference>
<dbReference type="GO" id="GO:0005737">
    <property type="term" value="C:cytoplasm"/>
    <property type="evidence" value="ECO:0000318"/>
    <property type="project" value="GO_Central"/>
</dbReference>
<dbReference type="GO" id="GO:0030145">
    <property type="term" value="F:manganese ion binding"/>
    <property type="evidence" value="ECO:0007669"/>
    <property type="project" value="UniProtKB-UniRule"/>
</dbReference>
<dbReference type="GO" id="GO:0070006">
    <property type="term" value="F:metalloaminopeptidase activity"/>
    <property type="evidence" value="ECO:0007669"/>
    <property type="project" value="InterPro"/>
</dbReference>
<dbReference type="GO" id="GO:0008233">
    <property type="term" value="F:peptidase activity"/>
    <property type="evidence" value="ECO:0000318"/>
    <property type="project" value="GO_Central"/>
</dbReference>
<dbReference type="GO" id="GO:0006508">
    <property type="term" value="P:proteolysis"/>
    <property type="evidence" value="ECO:0000318"/>
    <property type="project" value="GO_Central"/>
</dbReference>
<dbReference type="CDD" id="cd00433">
    <property type="entry name" value="Peptidase_M17"/>
    <property type="match status" value="1"/>
</dbReference>
<dbReference type="Gene3D" id="3.40.220.10">
    <property type="entry name" value="Leucine Aminopeptidase, subunit E, domain 1"/>
    <property type="match status" value="1"/>
</dbReference>
<dbReference type="Gene3D" id="3.40.630.10">
    <property type="entry name" value="Zn peptidases"/>
    <property type="match status" value="1"/>
</dbReference>
<dbReference type="HAMAP" id="MF_00181">
    <property type="entry name" value="Cytosol_peptidase_M17"/>
    <property type="match status" value="1"/>
</dbReference>
<dbReference type="InterPro" id="IPR011356">
    <property type="entry name" value="Leucine_aapep/pepB"/>
</dbReference>
<dbReference type="InterPro" id="IPR043472">
    <property type="entry name" value="Macro_dom-like"/>
</dbReference>
<dbReference type="InterPro" id="IPR000819">
    <property type="entry name" value="Peptidase_M17_C"/>
</dbReference>
<dbReference type="InterPro" id="IPR023042">
    <property type="entry name" value="Peptidase_M17_leu_NH2_pept"/>
</dbReference>
<dbReference type="InterPro" id="IPR008283">
    <property type="entry name" value="Peptidase_M17_N"/>
</dbReference>
<dbReference type="NCBIfam" id="NF002083">
    <property type="entry name" value="PRK00913.3-5"/>
    <property type="match status" value="1"/>
</dbReference>
<dbReference type="PANTHER" id="PTHR11963:SF23">
    <property type="entry name" value="CYTOSOL AMINOPEPTIDASE"/>
    <property type="match status" value="1"/>
</dbReference>
<dbReference type="PANTHER" id="PTHR11963">
    <property type="entry name" value="LEUCINE AMINOPEPTIDASE-RELATED"/>
    <property type="match status" value="1"/>
</dbReference>
<dbReference type="Pfam" id="PF00883">
    <property type="entry name" value="Peptidase_M17"/>
    <property type="match status" value="1"/>
</dbReference>
<dbReference type="Pfam" id="PF02789">
    <property type="entry name" value="Peptidase_M17_N"/>
    <property type="match status" value="1"/>
</dbReference>
<dbReference type="PRINTS" id="PR00481">
    <property type="entry name" value="LAMNOPPTDASE"/>
</dbReference>
<dbReference type="SUPFAM" id="SSF52949">
    <property type="entry name" value="Macro domain-like"/>
    <property type="match status" value="1"/>
</dbReference>
<dbReference type="SUPFAM" id="SSF53187">
    <property type="entry name" value="Zn-dependent exopeptidases"/>
    <property type="match status" value="1"/>
</dbReference>
<dbReference type="PROSITE" id="PS00631">
    <property type="entry name" value="CYTOSOL_AP"/>
    <property type="match status" value="1"/>
</dbReference>
<sequence length="478" mass="53585">MSFQCVKKYEDSYDKYVLAATSEKVVLPDYLDKESKKIAETIIKKNKFTAKASEKISMTLVNKKKVIEFIIIGLGEKKKLDAKNTRQYLFDGLKNIIGKVLFSFDNKDLDNIDILAEVVEHINYKFDKYFSKKKEEFLEVSYLTDKKVPKLIEGYELAKISNIVKDLVNEQAEVLNPKELADRATKLGKKFGFDVEILDEKKAQKLGMNAYLSVARAAHHRPYVIVMRYKGNAKSKYTFGLVGKGLTYDTGGLSLKPTDSMLTMRCDMGGAATMIGAMCSVAKMKLKKNVTCVVAACENSIGPNAYRPGDILTAMNGKTIEVTNTDAEGRLTLADALTYIVRKEKVNEVIDAATLTGAIMVALGEDVTGVFTNDEKMARKVIDASENWNEYFWQMPMFDLYKKNLKSSYADMQNTGVRWGGSTNAAKFLEEFIDDTKWVHLDIAGTAWASGANPYYSQKGATGQVFRTVYSYIKDNKN</sequence>
<comment type="function">
    <text evidence="1">Presumably involved in the processing and regular turnover of intracellular proteins. Catalyzes the removal of unsubstituted N-terminal amino acids from various peptides.</text>
</comment>
<comment type="catalytic activity">
    <reaction evidence="1">
        <text>Release of an N-terminal amino acid, Xaa-|-Yaa-, in which Xaa is preferably Leu, but may be other amino acids including Pro although not Arg or Lys, and Yaa may be Pro. Amino acid amides and methyl esters are also readily hydrolyzed, but rates on arylamides are exceedingly low.</text>
        <dbReference type="EC" id="3.4.11.1"/>
    </reaction>
</comment>
<comment type="catalytic activity">
    <reaction evidence="1">
        <text>Release of an N-terminal amino acid, preferentially leucine, but not glutamic or aspartic acids.</text>
        <dbReference type="EC" id="3.4.11.10"/>
    </reaction>
</comment>
<comment type="cofactor">
    <cofactor evidence="1">
        <name>Mn(2+)</name>
        <dbReference type="ChEBI" id="CHEBI:29035"/>
    </cofactor>
    <text evidence="1">Binds 2 manganese ions per subunit.</text>
</comment>
<comment type="subcellular location">
    <subcellularLocation>
        <location evidence="1">Cytoplasm</location>
    </subcellularLocation>
</comment>
<comment type="similarity">
    <text evidence="1">Belongs to the peptidase M17 family.</text>
</comment>
<name>AMPA_FUSNN</name>
<accession>Q8RHT8</accession>
<evidence type="ECO:0000255" key="1">
    <source>
        <dbReference type="HAMAP-Rule" id="MF_00181"/>
    </source>
</evidence>
<keyword id="KW-0031">Aminopeptidase</keyword>
<keyword id="KW-0963">Cytoplasm</keyword>
<keyword id="KW-0378">Hydrolase</keyword>
<keyword id="KW-0464">Manganese</keyword>
<keyword id="KW-0479">Metal-binding</keyword>
<keyword id="KW-0645">Protease</keyword>
<keyword id="KW-1185">Reference proteome</keyword>
<proteinExistence type="inferred from homology"/>
<organism>
    <name type="scientific">Fusobacterium nucleatum subsp. nucleatum (strain ATCC 25586 / DSM 15643 / BCRC 10681 / CIP 101130 / JCM 8532 / KCTC 2640 / LMG 13131 / VPI 4355)</name>
    <dbReference type="NCBI Taxonomy" id="190304"/>
    <lineage>
        <taxon>Bacteria</taxon>
        <taxon>Fusobacteriati</taxon>
        <taxon>Fusobacteriota</taxon>
        <taxon>Fusobacteriia</taxon>
        <taxon>Fusobacteriales</taxon>
        <taxon>Fusobacteriaceae</taxon>
        <taxon>Fusobacterium</taxon>
    </lineage>
</organism>
<reference key="1">
    <citation type="journal article" date="2002" name="J. Bacteriol.">
        <title>Genome sequence and analysis of the oral bacterium Fusobacterium nucleatum strain ATCC 25586.</title>
        <authorList>
            <person name="Kapatral V."/>
            <person name="Anderson I."/>
            <person name="Ivanova N."/>
            <person name="Reznik G."/>
            <person name="Los T."/>
            <person name="Lykidis A."/>
            <person name="Bhattacharyya A."/>
            <person name="Bartman A."/>
            <person name="Gardner W."/>
            <person name="Grechkin G."/>
            <person name="Zhu L."/>
            <person name="Vasieva O."/>
            <person name="Chu L."/>
            <person name="Kogan Y."/>
            <person name="Chaga O."/>
            <person name="Goltsman E."/>
            <person name="Bernal A."/>
            <person name="Larsen N."/>
            <person name="D'Souza M."/>
            <person name="Walunas T."/>
            <person name="Pusch G."/>
            <person name="Haselkorn R."/>
            <person name="Fonstein M."/>
            <person name="Kyrpides N.C."/>
            <person name="Overbeek R."/>
        </authorList>
    </citation>
    <scope>NUCLEOTIDE SEQUENCE [LARGE SCALE GENOMIC DNA]</scope>
    <source>
        <strain>ATCC 25586 / DSM 15643 / BCRC 10681 / CIP 101130 / JCM 8532 / KCTC 2640 / LMG 13131 / VPI 4355</strain>
    </source>
</reference>
<gene>
    <name evidence="1" type="primary">pepA</name>
    <name type="ordered locus">FN1906</name>
</gene>
<feature type="chain" id="PRO_0000165754" description="Probable cytosol aminopeptidase">
    <location>
        <begin position="1"/>
        <end position="478"/>
    </location>
</feature>
<feature type="active site" evidence="1">
    <location>
        <position position="256"/>
    </location>
</feature>
<feature type="active site" evidence="1">
    <location>
        <position position="330"/>
    </location>
</feature>
<feature type="binding site" evidence="1">
    <location>
        <position position="244"/>
    </location>
    <ligand>
        <name>Mn(2+)</name>
        <dbReference type="ChEBI" id="CHEBI:29035"/>
        <label>2</label>
    </ligand>
</feature>
<feature type="binding site" evidence="1">
    <location>
        <position position="249"/>
    </location>
    <ligand>
        <name>Mn(2+)</name>
        <dbReference type="ChEBI" id="CHEBI:29035"/>
        <label>1</label>
    </ligand>
</feature>
<feature type="binding site" evidence="1">
    <location>
        <position position="249"/>
    </location>
    <ligand>
        <name>Mn(2+)</name>
        <dbReference type="ChEBI" id="CHEBI:29035"/>
        <label>2</label>
    </ligand>
</feature>
<feature type="binding site" evidence="1">
    <location>
        <position position="267"/>
    </location>
    <ligand>
        <name>Mn(2+)</name>
        <dbReference type="ChEBI" id="CHEBI:29035"/>
        <label>2</label>
    </ligand>
</feature>
<feature type="binding site" evidence="1">
    <location>
        <position position="326"/>
    </location>
    <ligand>
        <name>Mn(2+)</name>
        <dbReference type="ChEBI" id="CHEBI:29035"/>
        <label>1</label>
    </ligand>
</feature>
<feature type="binding site" evidence="1">
    <location>
        <position position="328"/>
    </location>
    <ligand>
        <name>Mn(2+)</name>
        <dbReference type="ChEBI" id="CHEBI:29035"/>
        <label>1</label>
    </ligand>
</feature>
<feature type="binding site" evidence="1">
    <location>
        <position position="328"/>
    </location>
    <ligand>
        <name>Mn(2+)</name>
        <dbReference type="ChEBI" id="CHEBI:29035"/>
        <label>2</label>
    </ligand>
</feature>
<protein>
    <recommendedName>
        <fullName evidence="1">Probable cytosol aminopeptidase</fullName>
        <ecNumber evidence="1">3.4.11.1</ecNumber>
    </recommendedName>
    <alternativeName>
        <fullName evidence="1">Leucine aminopeptidase</fullName>
        <shortName evidence="1">LAP</shortName>
        <ecNumber evidence="1">3.4.11.10</ecNumber>
    </alternativeName>
    <alternativeName>
        <fullName evidence="1">Leucyl aminopeptidase</fullName>
    </alternativeName>
</protein>